<organism>
    <name type="scientific">Aliivibrio fischeri (strain ATCC 700601 / ES114)</name>
    <name type="common">Vibrio fischeri</name>
    <dbReference type="NCBI Taxonomy" id="312309"/>
    <lineage>
        <taxon>Bacteria</taxon>
        <taxon>Pseudomonadati</taxon>
        <taxon>Pseudomonadota</taxon>
        <taxon>Gammaproteobacteria</taxon>
        <taxon>Vibrionales</taxon>
        <taxon>Vibrionaceae</taxon>
        <taxon>Aliivibrio</taxon>
    </lineage>
</organism>
<protein>
    <recommendedName>
        <fullName evidence="1">Histidinol dehydrogenase</fullName>
        <shortName evidence="1">HDH</shortName>
        <ecNumber evidence="1">1.1.1.23</ecNumber>
    </recommendedName>
</protein>
<keyword id="KW-0028">Amino-acid biosynthesis</keyword>
<keyword id="KW-0368">Histidine biosynthesis</keyword>
<keyword id="KW-0479">Metal-binding</keyword>
<keyword id="KW-0520">NAD</keyword>
<keyword id="KW-0560">Oxidoreductase</keyword>
<keyword id="KW-1185">Reference proteome</keyword>
<keyword id="KW-0862">Zinc</keyword>
<evidence type="ECO:0000255" key="1">
    <source>
        <dbReference type="HAMAP-Rule" id="MF_01024"/>
    </source>
</evidence>
<dbReference type="EC" id="1.1.1.23" evidence="1"/>
<dbReference type="EMBL" id="CP000020">
    <property type="protein sequence ID" value="AAW85508.1"/>
    <property type="molecule type" value="Genomic_DNA"/>
</dbReference>
<dbReference type="RefSeq" id="WP_011261646.1">
    <property type="nucleotide sequence ID" value="NC_006840.2"/>
</dbReference>
<dbReference type="RefSeq" id="YP_204396.1">
    <property type="nucleotide sequence ID" value="NC_006840.2"/>
</dbReference>
<dbReference type="SMR" id="Q5E638"/>
<dbReference type="STRING" id="312309.VF_1013"/>
<dbReference type="EnsemblBacteria" id="AAW85508">
    <property type="protein sequence ID" value="AAW85508"/>
    <property type="gene ID" value="VF_1013"/>
</dbReference>
<dbReference type="GeneID" id="54163685"/>
<dbReference type="KEGG" id="vfi:VF_1013"/>
<dbReference type="PATRIC" id="fig|312309.11.peg.1013"/>
<dbReference type="eggNOG" id="COG0141">
    <property type="taxonomic scope" value="Bacteria"/>
</dbReference>
<dbReference type="HOGENOM" id="CLU_006732_3_0_6"/>
<dbReference type="OrthoDB" id="9805269at2"/>
<dbReference type="UniPathway" id="UPA00031">
    <property type="reaction ID" value="UER00014"/>
</dbReference>
<dbReference type="Proteomes" id="UP000000537">
    <property type="component" value="Chromosome I"/>
</dbReference>
<dbReference type="GO" id="GO:0005829">
    <property type="term" value="C:cytosol"/>
    <property type="evidence" value="ECO:0007669"/>
    <property type="project" value="TreeGrafter"/>
</dbReference>
<dbReference type="GO" id="GO:0004399">
    <property type="term" value="F:histidinol dehydrogenase activity"/>
    <property type="evidence" value="ECO:0007669"/>
    <property type="project" value="UniProtKB-UniRule"/>
</dbReference>
<dbReference type="GO" id="GO:0051287">
    <property type="term" value="F:NAD binding"/>
    <property type="evidence" value="ECO:0007669"/>
    <property type="project" value="InterPro"/>
</dbReference>
<dbReference type="GO" id="GO:0008270">
    <property type="term" value="F:zinc ion binding"/>
    <property type="evidence" value="ECO:0007669"/>
    <property type="project" value="UniProtKB-UniRule"/>
</dbReference>
<dbReference type="GO" id="GO:0000105">
    <property type="term" value="P:L-histidine biosynthetic process"/>
    <property type="evidence" value="ECO:0007669"/>
    <property type="project" value="UniProtKB-UniRule"/>
</dbReference>
<dbReference type="CDD" id="cd06572">
    <property type="entry name" value="Histidinol_dh"/>
    <property type="match status" value="1"/>
</dbReference>
<dbReference type="FunFam" id="3.40.50.1980:FF:000001">
    <property type="entry name" value="Histidinol dehydrogenase"/>
    <property type="match status" value="1"/>
</dbReference>
<dbReference type="FunFam" id="1.20.5.1300:FF:000002">
    <property type="entry name" value="Histidinol dehydrogenase, chloroplastic"/>
    <property type="match status" value="1"/>
</dbReference>
<dbReference type="FunFam" id="3.40.50.1980:FF:000002">
    <property type="entry name" value="Histidinol dehydrogenase, chloroplastic"/>
    <property type="match status" value="1"/>
</dbReference>
<dbReference type="Gene3D" id="1.20.5.1300">
    <property type="match status" value="1"/>
</dbReference>
<dbReference type="Gene3D" id="3.40.50.1980">
    <property type="entry name" value="Nitrogenase molybdenum iron protein domain"/>
    <property type="match status" value="2"/>
</dbReference>
<dbReference type="HAMAP" id="MF_01024">
    <property type="entry name" value="HisD"/>
    <property type="match status" value="1"/>
</dbReference>
<dbReference type="InterPro" id="IPR016161">
    <property type="entry name" value="Ald_DH/histidinol_DH"/>
</dbReference>
<dbReference type="InterPro" id="IPR001692">
    <property type="entry name" value="Histidinol_DH_CS"/>
</dbReference>
<dbReference type="InterPro" id="IPR022695">
    <property type="entry name" value="Histidinol_DH_monofunct"/>
</dbReference>
<dbReference type="InterPro" id="IPR012131">
    <property type="entry name" value="Hstdl_DH"/>
</dbReference>
<dbReference type="NCBIfam" id="TIGR00069">
    <property type="entry name" value="hisD"/>
    <property type="match status" value="1"/>
</dbReference>
<dbReference type="PANTHER" id="PTHR21256:SF2">
    <property type="entry name" value="HISTIDINE BIOSYNTHESIS TRIFUNCTIONAL PROTEIN"/>
    <property type="match status" value="1"/>
</dbReference>
<dbReference type="PANTHER" id="PTHR21256">
    <property type="entry name" value="HISTIDINOL DEHYDROGENASE HDH"/>
    <property type="match status" value="1"/>
</dbReference>
<dbReference type="Pfam" id="PF00815">
    <property type="entry name" value="Histidinol_dh"/>
    <property type="match status" value="1"/>
</dbReference>
<dbReference type="PIRSF" id="PIRSF000099">
    <property type="entry name" value="Histidinol_dh"/>
    <property type="match status" value="1"/>
</dbReference>
<dbReference type="PRINTS" id="PR00083">
    <property type="entry name" value="HOLDHDRGNASE"/>
</dbReference>
<dbReference type="SUPFAM" id="SSF53720">
    <property type="entry name" value="ALDH-like"/>
    <property type="match status" value="1"/>
</dbReference>
<dbReference type="PROSITE" id="PS00611">
    <property type="entry name" value="HISOL_DEHYDROGENASE"/>
    <property type="match status" value="1"/>
</dbReference>
<comment type="function">
    <text evidence="1">Catalyzes the sequential NAD-dependent oxidations of L-histidinol to L-histidinaldehyde and then to L-histidine.</text>
</comment>
<comment type="catalytic activity">
    <reaction evidence="1">
        <text>L-histidinol + 2 NAD(+) + H2O = L-histidine + 2 NADH + 3 H(+)</text>
        <dbReference type="Rhea" id="RHEA:20641"/>
        <dbReference type="ChEBI" id="CHEBI:15377"/>
        <dbReference type="ChEBI" id="CHEBI:15378"/>
        <dbReference type="ChEBI" id="CHEBI:57540"/>
        <dbReference type="ChEBI" id="CHEBI:57595"/>
        <dbReference type="ChEBI" id="CHEBI:57699"/>
        <dbReference type="ChEBI" id="CHEBI:57945"/>
        <dbReference type="EC" id="1.1.1.23"/>
    </reaction>
</comment>
<comment type="cofactor">
    <cofactor evidence="1">
        <name>Zn(2+)</name>
        <dbReference type="ChEBI" id="CHEBI:29105"/>
    </cofactor>
    <text evidence="1">Binds 1 zinc ion per subunit.</text>
</comment>
<comment type="pathway">
    <text evidence="1">Amino-acid biosynthesis; L-histidine biosynthesis; L-histidine from 5-phospho-alpha-D-ribose 1-diphosphate: step 9/9.</text>
</comment>
<comment type="similarity">
    <text evidence="1">Belongs to the histidinol dehydrogenase family.</text>
</comment>
<reference key="1">
    <citation type="journal article" date="2005" name="Proc. Natl. Acad. Sci. U.S.A.">
        <title>Complete genome sequence of Vibrio fischeri: a symbiotic bacterium with pathogenic congeners.</title>
        <authorList>
            <person name="Ruby E.G."/>
            <person name="Urbanowski M."/>
            <person name="Campbell J."/>
            <person name="Dunn A."/>
            <person name="Faini M."/>
            <person name="Gunsalus R."/>
            <person name="Lostroh P."/>
            <person name="Lupp C."/>
            <person name="McCann J."/>
            <person name="Millikan D."/>
            <person name="Schaefer A."/>
            <person name="Stabb E."/>
            <person name="Stevens A."/>
            <person name="Visick K."/>
            <person name="Whistler C."/>
            <person name="Greenberg E.P."/>
        </authorList>
    </citation>
    <scope>NUCLEOTIDE SEQUENCE [LARGE SCALE GENOMIC DNA]</scope>
    <source>
        <strain>ATCC 700601 / ES114</strain>
    </source>
</reference>
<name>HISX_ALIF1</name>
<gene>
    <name evidence="1" type="primary">hisD</name>
    <name type="ordered locus">VF_1013</name>
</gene>
<feature type="chain" id="PRO_0000135875" description="Histidinol dehydrogenase">
    <location>
        <begin position="1"/>
        <end position="439"/>
    </location>
</feature>
<feature type="active site" description="Proton acceptor" evidence="1">
    <location>
        <position position="323"/>
    </location>
</feature>
<feature type="active site" description="Proton acceptor" evidence="1">
    <location>
        <position position="324"/>
    </location>
</feature>
<feature type="binding site" evidence="1">
    <location>
        <position position="127"/>
    </location>
    <ligand>
        <name>NAD(+)</name>
        <dbReference type="ChEBI" id="CHEBI:57540"/>
    </ligand>
</feature>
<feature type="binding site" evidence="1">
    <location>
        <position position="185"/>
    </location>
    <ligand>
        <name>NAD(+)</name>
        <dbReference type="ChEBI" id="CHEBI:57540"/>
    </ligand>
</feature>
<feature type="binding site" evidence="1">
    <location>
        <position position="208"/>
    </location>
    <ligand>
        <name>NAD(+)</name>
        <dbReference type="ChEBI" id="CHEBI:57540"/>
    </ligand>
</feature>
<feature type="binding site" evidence="1">
    <location>
        <position position="234"/>
    </location>
    <ligand>
        <name>substrate</name>
    </ligand>
</feature>
<feature type="binding site" evidence="1">
    <location>
        <position position="256"/>
    </location>
    <ligand>
        <name>substrate</name>
    </ligand>
</feature>
<feature type="binding site" evidence="1">
    <location>
        <position position="256"/>
    </location>
    <ligand>
        <name>Zn(2+)</name>
        <dbReference type="ChEBI" id="CHEBI:29105"/>
    </ligand>
</feature>
<feature type="binding site" evidence="1">
    <location>
        <position position="259"/>
    </location>
    <ligand>
        <name>substrate</name>
    </ligand>
</feature>
<feature type="binding site" evidence="1">
    <location>
        <position position="259"/>
    </location>
    <ligand>
        <name>Zn(2+)</name>
        <dbReference type="ChEBI" id="CHEBI:29105"/>
    </ligand>
</feature>
<feature type="binding site" evidence="1">
    <location>
        <position position="324"/>
    </location>
    <ligand>
        <name>substrate</name>
    </ligand>
</feature>
<feature type="binding site" evidence="1">
    <location>
        <position position="357"/>
    </location>
    <ligand>
        <name>substrate</name>
    </ligand>
</feature>
<feature type="binding site" evidence="1">
    <location>
        <position position="357"/>
    </location>
    <ligand>
        <name>Zn(2+)</name>
        <dbReference type="ChEBI" id="CHEBI:29105"/>
    </ligand>
</feature>
<feature type="binding site" evidence="1">
    <location>
        <position position="411"/>
    </location>
    <ligand>
        <name>substrate</name>
    </ligand>
</feature>
<feature type="binding site" evidence="1">
    <location>
        <position position="416"/>
    </location>
    <ligand>
        <name>substrate</name>
    </ligand>
</feature>
<feature type="binding site" evidence="1">
    <location>
        <position position="416"/>
    </location>
    <ligand>
        <name>Zn(2+)</name>
        <dbReference type="ChEBI" id="CHEBI:29105"/>
    </ligand>
</feature>
<accession>Q5E638</accession>
<sequence>MKTLVWQSLSDSQQDTVLQRPAITEGANITAAVTSVINTVKQEGDAGVFALTEKFDGVKPDSIRVSNAEIEAASDRLSEEMKTALKQAYSNISKFHQAQKPQPVKVETQPGVICEQITMPINKVGLYIPGGSAPLPSTVLMLGIPAQIAGCHKVVLCSPPPIADEILYVAKLCKIDEVYNIGGAQAVAAMAYGTESVSKVDKIFGPGNAYVTEAKRQVSNDFRGAAIDMPAGPSEVLVIADESADPDFIAADLLSQAEHGPDSQVVLVTPSPIIADQVADAVERQLKELSREDIARQALGSSLLIVADSLTQCVSISNFYGPEHLIVQTKNPRELLPLLDNAGSIFLGDYSPESAGDYASGTNHVLPTYGYTRTYSSLGLADFSKRMTVQELTADGLKGLAPTVVTMAEAEGLDAHKRAVTIRIEKLAQLDVNKQEVNQ</sequence>
<proteinExistence type="inferred from homology"/>